<protein>
    <recommendedName>
        <fullName evidence="1">Ribosomal RNA small subunit methyltransferase G</fullName>
        <ecNumber evidence="1">2.1.1.-</ecNumber>
    </recommendedName>
    <alternativeName>
        <fullName evidence="1">16S rRNA 7-methylguanosine methyltransferase</fullName>
        <shortName evidence="1">16S rRNA m7G methyltransferase</shortName>
    </alternativeName>
</protein>
<feature type="chain" id="PRO_0000184243" description="Ribosomal RNA small subunit methyltransferase G">
    <location>
        <begin position="1"/>
        <end position="222"/>
    </location>
</feature>
<feature type="binding site" evidence="1">
    <location>
        <position position="82"/>
    </location>
    <ligand>
        <name>S-adenosyl-L-methionine</name>
        <dbReference type="ChEBI" id="CHEBI:59789"/>
    </ligand>
</feature>
<feature type="binding site" evidence="1">
    <location>
        <position position="87"/>
    </location>
    <ligand>
        <name>S-adenosyl-L-methionine</name>
        <dbReference type="ChEBI" id="CHEBI:59789"/>
    </ligand>
</feature>
<feature type="binding site" evidence="1">
    <location>
        <begin position="132"/>
        <end position="133"/>
    </location>
    <ligand>
        <name>S-adenosyl-L-methionine</name>
        <dbReference type="ChEBI" id="CHEBI:59789"/>
    </ligand>
</feature>
<feature type="binding site" evidence="1">
    <location>
        <position position="150"/>
    </location>
    <ligand>
        <name>S-adenosyl-L-methionine</name>
        <dbReference type="ChEBI" id="CHEBI:59789"/>
    </ligand>
</feature>
<organism>
    <name type="scientific">Corynebacterium jeikeium (strain K411)</name>
    <dbReference type="NCBI Taxonomy" id="306537"/>
    <lineage>
        <taxon>Bacteria</taxon>
        <taxon>Bacillati</taxon>
        <taxon>Actinomycetota</taxon>
        <taxon>Actinomycetes</taxon>
        <taxon>Mycobacteriales</taxon>
        <taxon>Corynebacteriaceae</taxon>
        <taxon>Corynebacterium</taxon>
    </lineage>
</organism>
<evidence type="ECO:0000255" key="1">
    <source>
        <dbReference type="HAMAP-Rule" id="MF_00074"/>
    </source>
</evidence>
<keyword id="KW-0963">Cytoplasm</keyword>
<keyword id="KW-0489">Methyltransferase</keyword>
<keyword id="KW-1185">Reference proteome</keyword>
<keyword id="KW-0698">rRNA processing</keyword>
<keyword id="KW-0949">S-adenosyl-L-methionine</keyword>
<keyword id="KW-0808">Transferase</keyword>
<proteinExistence type="inferred from homology"/>
<dbReference type="EC" id="2.1.1.-" evidence="1"/>
<dbReference type="EMBL" id="CR931997">
    <property type="protein sequence ID" value="CAI38282.1"/>
    <property type="molecule type" value="Genomic_DNA"/>
</dbReference>
<dbReference type="RefSeq" id="WP_011274348.1">
    <property type="nucleotide sequence ID" value="NC_007164.1"/>
</dbReference>
<dbReference type="SMR" id="Q4JSC5"/>
<dbReference type="STRING" id="306537.jk2100"/>
<dbReference type="KEGG" id="cjk:jk2100"/>
<dbReference type="PATRIC" id="fig|306537.10.peg.2130"/>
<dbReference type="eggNOG" id="COG0357">
    <property type="taxonomic scope" value="Bacteria"/>
</dbReference>
<dbReference type="HOGENOM" id="CLU_065341_5_0_11"/>
<dbReference type="OrthoDB" id="9808773at2"/>
<dbReference type="Proteomes" id="UP000000545">
    <property type="component" value="Chromosome"/>
</dbReference>
<dbReference type="GO" id="GO:0005829">
    <property type="term" value="C:cytosol"/>
    <property type="evidence" value="ECO:0007669"/>
    <property type="project" value="TreeGrafter"/>
</dbReference>
<dbReference type="GO" id="GO:0070043">
    <property type="term" value="F:rRNA (guanine-N7-)-methyltransferase activity"/>
    <property type="evidence" value="ECO:0007669"/>
    <property type="project" value="UniProtKB-UniRule"/>
</dbReference>
<dbReference type="Gene3D" id="3.40.50.150">
    <property type="entry name" value="Vaccinia Virus protein VP39"/>
    <property type="match status" value="1"/>
</dbReference>
<dbReference type="HAMAP" id="MF_00074">
    <property type="entry name" value="16SrRNA_methyltr_G"/>
    <property type="match status" value="1"/>
</dbReference>
<dbReference type="InterPro" id="IPR003682">
    <property type="entry name" value="rRNA_ssu_MeTfrase_G"/>
</dbReference>
<dbReference type="InterPro" id="IPR029063">
    <property type="entry name" value="SAM-dependent_MTases_sf"/>
</dbReference>
<dbReference type="NCBIfam" id="TIGR00138">
    <property type="entry name" value="rsmG_gidB"/>
    <property type="match status" value="1"/>
</dbReference>
<dbReference type="PANTHER" id="PTHR31760">
    <property type="entry name" value="S-ADENOSYL-L-METHIONINE-DEPENDENT METHYLTRANSFERASES SUPERFAMILY PROTEIN"/>
    <property type="match status" value="1"/>
</dbReference>
<dbReference type="PANTHER" id="PTHR31760:SF0">
    <property type="entry name" value="S-ADENOSYL-L-METHIONINE-DEPENDENT METHYLTRANSFERASES SUPERFAMILY PROTEIN"/>
    <property type="match status" value="1"/>
</dbReference>
<dbReference type="Pfam" id="PF02527">
    <property type="entry name" value="GidB"/>
    <property type="match status" value="1"/>
</dbReference>
<dbReference type="SUPFAM" id="SSF53335">
    <property type="entry name" value="S-adenosyl-L-methionine-dependent methyltransferases"/>
    <property type="match status" value="1"/>
</dbReference>
<sequence length="222" mass="23464">MAKQDDASIQSPDIGEPPAAAREVFGDRLRLACDYAEFLATAGIERGLLGPREVPRIWERHILNSAVLGEVIDEGCRVVDIGSGAGLPGIPLAIARPDLKVQLLEPLLRRYNFLAEVNSQLNLGCEVVRGRAEDPAVVEALGGADVATSRAVAPLGKLTRWSLPLVKVGGAMKALKGGSVAEELERDAKEIAKAGGGDGTIELVGESKVAEPTHVITIPRIR</sequence>
<gene>
    <name evidence="1" type="primary">rsmG</name>
    <name type="ordered locus">jk2100</name>
</gene>
<name>RSMG_CORJK</name>
<reference key="1">
    <citation type="journal article" date="2005" name="J. Bacteriol.">
        <title>Complete genome sequence and analysis of the multiresistant nosocomial pathogen Corynebacterium jeikeium K411, a lipid-requiring bacterium of the human skin flora.</title>
        <authorList>
            <person name="Tauch A."/>
            <person name="Kaiser O."/>
            <person name="Hain T."/>
            <person name="Goesmann A."/>
            <person name="Weisshaar B."/>
            <person name="Albersmeier A."/>
            <person name="Bekel T."/>
            <person name="Bischoff N."/>
            <person name="Brune I."/>
            <person name="Chakraborty T."/>
            <person name="Kalinowski J."/>
            <person name="Meyer F."/>
            <person name="Rupp O."/>
            <person name="Schneiker S."/>
            <person name="Viehoever P."/>
            <person name="Puehler A."/>
        </authorList>
    </citation>
    <scope>NUCLEOTIDE SEQUENCE [LARGE SCALE GENOMIC DNA]</scope>
    <source>
        <strain>K411</strain>
    </source>
</reference>
<comment type="function">
    <text evidence="1">Specifically methylates the N7 position of guanine in position 518 of 16S rRNA.</text>
</comment>
<comment type="subcellular location">
    <subcellularLocation>
        <location evidence="1">Cytoplasm</location>
    </subcellularLocation>
</comment>
<comment type="similarity">
    <text evidence="1">Belongs to the methyltransferase superfamily. RNA methyltransferase RsmG family.</text>
</comment>
<accession>Q4JSC5</accession>